<dbReference type="EC" id="7.1.2.2" evidence="1"/>
<dbReference type="EMBL" id="CP000316">
    <property type="protein sequence ID" value="ABE42292.1"/>
    <property type="molecule type" value="Genomic_DNA"/>
</dbReference>
<dbReference type="RefSeq" id="WP_011481299.1">
    <property type="nucleotide sequence ID" value="NC_007948.1"/>
</dbReference>
<dbReference type="SMR" id="Q12GQ0"/>
<dbReference type="STRING" id="296591.Bpro_0327"/>
<dbReference type="KEGG" id="pol:Bpro_0327"/>
<dbReference type="eggNOG" id="COG0055">
    <property type="taxonomic scope" value="Bacteria"/>
</dbReference>
<dbReference type="HOGENOM" id="CLU_022398_0_2_4"/>
<dbReference type="OrthoDB" id="9801639at2"/>
<dbReference type="Proteomes" id="UP000001983">
    <property type="component" value="Chromosome"/>
</dbReference>
<dbReference type="GO" id="GO:0005886">
    <property type="term" value="C:plasma membrane"/>
    <property type="evidence" value="ECO:0007669"/>
    <property type="project" value="UniProtKB-SubCell"/>
</dbReference>
<dbReference type="GO" id="GO:0045259">
    <property type="term" value="C:proton-transporting ATP synthase complex"/>
    <property type="evidence" value="ECO:0007669"/>
    <property type="project" value="UniProtKB-KW"/>
</dbReference>
<dbReference type="GO" id="GO:0005524">
    <property type="term" value="F:ATP binding"/>
    <property type="evidence" value="ECO:0007669"/>
    <property type="project" value="UniProtKB-UniRule"/>
</dbReference>
<dbReference type="GO" id="GO:0016887">
    <property type="term" value="F:ATP hydrolysis activity"/>
    <property type="evidence" value="ECO:0007669"/>
    <property type="project" value="InterPro"/>
</dbReference>
<dbReference type="GO" id="GO:0046933">
    <property type="term" value="F:proton-transporting ATP synthase activity, rotational mechanism"/>
    <property type="evidence" value="ECO:0007669"/>
    <property type="project" value="UniProtKB-UniRule"/>
</dbReference>
<dbReference type="CDD" id="cd18110">
    <property type="entry name" value="ATP-synt_F1_beta_C"/>
    <property type="match status" value="1"/>
</dbReference>
<dbReference type="CDD" id="cd18115">
    <property type="entry name" value="ATP-synt_F1_beta_N"/>
    <property type="match status" value="1"/>
</dbReference>
<dbReference type="CDD" id="cd01133">
    <property type="entry name" value="F1-ATPase_beta_CD"/>
    <property type="match status" value="1"/>
</dbReference>
<dbReference type="FunFam" id="1.10.1140.10:FF:000001">
    <property type="entry name" value="ATP synthase subunit beta"/>
    <property type="match status" value="1"/>
</dbReference>
<dbReference type="FunFam" id="3.40.50.300:FF:000004">
    <property type="entry name" value="ATP synthase subunit beta"/>
    <property type="match status" value="1"/>
</dbReference>
<dbReference type="Gene3D" id="2.40.10.170">
    <property type="match status" value="1"/>
</dbReference>
<dbReference type="Gene3D" id="1.10.1140.10">
    <property type="entry name" value="Bovine Mitochondrial F1-atpase, Atp Synthase Beta Chain, Chain D, domain 3"/>
    <property type="match status" value="1"/>
</dbReference>
<dbReference type="Gene3D" id="3.40.50.300">
    <property type="entry name" value="P-loop containing nucleotide triphosphate hydrolases"/>
    <property type="match status" value="1"/>
</dbReference>
<dbReference type="HAMAP" id="MF_01347">
    <property type="entry name" value="ATP_synth_beta_bact"/>
    <property type="match status" value="1"/>
</dbReference>
<dbReference type="InterPro" id="IPR003593">
    <property type="entry name" value="AAA+_ATPase"/>
</dbReference>
<dbReference type="InterPro" id="IPR055190">
    <property type="entry name" value="ATP-synt_VA_C"/>
</dbReference>
<dbReference type="InterPro" id="IPR005722">
    <property type="entry name" value="ATP_synth_F1_bsu"/>
</dbReference>
<dbReference type="InterPro" id="IPR020003">
    <property type="entry name" value="ATPase_a/bsu_AS"/>
</dbReference>
<dbReference type="InterPro" id="IPR050053">
    <property type="entry name" value="ATPase_alpha/beta_chains"/>
</dbReference>
<dbReference type="InterPro" id="IPR004100">
    <property type="entry name" value="ATPase_F1/V1/A1_a/bsu_N"/>
</dbReference>
<dbReference type="InterPro" id="IPR036121">
    <property type="entry name" value="ATPase_F1/V1/A1_a/bsu_N_sf"/>
</dbReference>
<dbReference type="InterPro" id="IPR000194">
    <property type="entry name" value="ATPase_F1/V1/A1_a/bsu_nucl-bd"/>
</dbReference>
<dbReference type="InterPro" id="IPR024034">
    <property type="entry name" value="ATPase_F1/V1_b/a_C"/>
</dbReference>
<dbReference type="InterPro" id="IPR027417">
    <property type="entry name" value="P-loop_NTPase"/>
</dbReference>
<dbReference type="NCBIfam" id="TIGR01039">
    <property type="entry name" value="atpD"/>
    <property type="match status" value="1"/>
</dbReference>
<dbReference type="PANTHER" id="PTHR15184">
    <property type="entry name" value="ATP SYNTHASE"/>
    <property type="match status" value="1"/>
</dbReference>
<dbReference type="PANTHER" id="PTHR15184:SF71">
    <property type="entry name" value="ATP SYNTHASE SUBUNIT BETA, MITOCHONDRIAL"/>
    <property type="match status" value="1"/>
</dbReference>
<dbReference type="Pfam" id="PF00006">
    <property type="entry name" value="ATP-synt_ab"/>
    <property type="match status" value="1"/>
</dbReference>
<dbReference type="Pfam" id="PF02874">
    <property type="entry name" value="ATP-synt_ab_N"/>
    <property type="match status" value="1"/>
</dbReference>
<dbReference type="Pfam" id="PF22919">
    <property type="entry name" value="ATP-synt_VA_C"/>
    <property type="match status" value="1"/>
</dbReference>
<dbReference type="SMART" id="SM00382">
    <property type="entry name" value="AAA"/>
    <property type="match status" value="1"/>
</dbReference>
<dbReference type="SUPFAM" id="SSF47917">
    <property type="entry name" value="C-terminal domain of alpha and beta subunits of F1 ATP synthase"/>
    <property type="match status" value="1"/>
</dbReference>
<dbReference type="SUPFAM" id="SSF50615">
    <property type="entry name" value="N-terminal domain of alpha and beta subunits of F1 ATP synthase"/>
    <property type="match status" value="1"/>
</dbReference>
<dbReference type="SUPFAM" id="SSF52540">
    <property type="entry name" value="P-loop containing nucleoside triphosphate hydrolases"/>
    <property type="match status" value="1"/>
</dbReference>
<dbReference type="PROSITE" id="PS00152">
    <property type="entry name" value="ATPASE_ALPHA_BETA"/>
    <property type="match status" value="1"/>
</dbReference>
<comment type="function">
    <text evidence="1">Produces ATP from ADP in the presence of a proton gradient across the membrane. The catalytic sites are hosted primarily by the beta subunits.</text>
</comment>
<comment type="catalytic activity">
    <reaction evidence="1">
        <text>ATP + H2O + 4 H(+)(in) = ADP + phosphate + 5 H(+)(out)</text>
        <dbReference type="Rhea" id="RHEA:57720"/>
        <dbReference type="ChEBI" id="CHEBI:15377"/>
        <dbReference type="ChEBI" id="CHEBI:15378"/>
        <dbReference type="ChEBI" id="CHEBI:30616"/>
        <dbReference type="ChEBI" id="CHEBI:43474"/>
        <dbReference type="ChEBI" id="CHEBI:456216"/>
        <dbReference type="EC" id="7.1.2.2"/>
    </reaction>
</comment>
<comment type="subunit">
    <text evidence="1">F-type ATPases have 2 components, CF(1) - the catalytic core - and CF(0) - the membrane proton channel. CF(1) has five subunits: alpha(3), beta(3), gamma(1), delta(1), epsilon(1). CF(0) has three main subunits: a(1), b(2) and c(9-12). The alpha and beta chains form an alternating ring which encloses part of the gamma chain. CF(1) is attached to CF(0) by a central stalk formed by the gamma and epsilon chains, while a peripheral stalk is formed by the delta and b chains.</text>
</comment>
<comment type="subcellular location">
    <subcellularLocation>
        <location evidence="1">Cell inner membrane</location>
        <topology evidence="1">Peripheral membrane protein</topology>
    </subcellularLocation>
</comment>
<comment type="similarity">
    <text evidence="1">Belongs to the ATPase alpha/beta chains family.</text>
</comment>
<reference key="1">
    <citation type="journal article" date="2008" name="Appl. Environ. Microbiol.">
        <title>The genome of Polaromonas sp. strain JS666: insights into the evolution of a hydrocarbon- and xenobiotic-degrading bacterium, and features of relevance to biotechnology.</title>
        <authorList>
            <person name="Mattes T.E."/>
            <person name="Alexander A.K."/>
            <person name="Richardson P.M."/>
            <person name="Munk A.C."/>
            <person name="Han C.S."/>
            <person name="Stothard P."/>
            <person name="Coleman N.V."/>
        </authorList>
    </citation>
    <scope>NUCLEOTIDE SEQUENCE [LARGE SCALE GENOMIC DNA]</scope>
    <source>
        <strain>JS666 / ATCC BAA-500</strain>
    </source>
</reference>
<keyword id="KW-0066">ATP synthesis</keyword>
<keyword id="KW-0067">ATP-binding</keyword>
<keyword id="KW-0997">Cell inner membrane</keyword>
<keyword id="KW-1003">Cell membrane</keyword>
<keyword id="KW-0139">CF(1)</keyword>
<keyword id="KW-0375">Hydrogen ion transport</keyword>
<keyword id="KW-0406">Ion transport</keyword>
<keyword id="KW-0472">Membrane</keyword>
<keyword id="KW-0547">Nucleotide-binding</keyword>
<keyword id="KW-1185">Reference proteome</keyword>
<keyword id="KW-1278">Translocase</keyword>
<keyword id="KW-0813">Transport</keyword>
<organism>
    <name type="scientific">Polaromonas sp. (strain JS666 / ATCC BAA-500)</name>
    <dbReference type="NCBI Taxonomy" id="296591"/>
    <lineage>
        <taxon>Bacteria</taxon>
        <taxon>Pseudomonadati</taxon>
        <taxon>Pseudomonadota</taxon>
        <taxon>Betaproteobacteria</taxon>
        <taxon>Burkholderiales</taxon>
        <taxon>Comamonadaceae</taxon>
        <taxon>Polaromonas</taxon>
    </lineage>
</organism>
<accession>Q12GQ0</accession>
<protein>
    <recommendedName>
        <fullName evidence="1">ATP synthase subunit beta</fullName>
        <ecNumber evidence="1">7.1.2.2</ecNumber>
    </recommendedName>
    <alternativeName>
        <fullName evidence="1">ATP synthase F1 sector subunit beta</fullName>
    </alternativeName>
    <alternativeName>
        <fullName evidence="1">F-ATPase subunit beta</fullName>
    </alternativeName>
</protein>
<evidence type="ECO:0000255" key="1">
    <source>
        <dbReference type="HAMAP-Rule" id="MF_01347"/>
    </source>
</evidence>
<name>ATPB_POLSJ</name>
<feature type="chain" id="PRO_0000339571" description="ATP synthase subunit beta">
    <location>
        <begin position="1"/>
        <end position="467"/>
    </location>
</feature>
<feature type="binding site" evidence="1">
    <location>
        <begin position="150"/>
        <end position="157"/>
    </location>
    <ligand>
        <name>ATP</name>
        <dbReference type="ChEBI" id="CHEBI:30616"/>
    </ligand>
</feature>
<gene>
    <name evidence="1" type="primary">atpD</name>
    <name type="ordered locus">Bpro_0327</name>
</gene>
<proteinExistence type="inferred from homology"/>
<sequence length="467" mass="50336">MAQAQGKIVQCIGAVVDVEFARDQMPKIYDALKMEGSALTLEVQQQLGDGIVRTIALGTSDGLRRGNTVYNTGANITVPVGKATLGRIMDVLGAPIDERGPVDQTLTAPIHRKAPAYDELSPSQELLETGIKVIDLVCPFAKGGKVGLFGGAGVGKTVNMMELINNIAKAHSGLSVFAGVGERTREGNDFYHEMADSGVVNLENLGESKVAMVYGQMNEPPGNRLRVALTGLTIAESFRDEGRDVLFFVDNIYRYTLAGTEVSALLGRMPSAVGYQPTLAEEMGRLQERITSTKVGSITSIQAVYVPADDLTDPSPATTFAHLDSTVVLSRDIASLGIYPAVDPLDSTSRQLDPNVVGEDHYATARAVQGTLQRYKELRDIIAILGMDELAPEDKLAVARARKIQRFLSQPFHVAEVFTGSPGKYVSLAETIRGFKMIVAGECDHLPEQAFYMVGTIDEAFEKAKKV</sequence>